<name>NIP22_MAIZE</name>
<feature type="chain" id="PRO_0000286031" description="Aquaporin NIP2-2">
    <location>
        <begin position="1"/>
        <end position="294"/>
    </location>
</feature>
<feature type="transmembrane region" description="Helical; Name=1" evidence="2">
    <location>
        <begin position="54"/>
        <end position="74"/>
    </location>
</feature>
<feature type="transmembrane region" description="Helical; Name=2" evidence="2">
    <location>
        <begin position="88"/>
        <end position="108"/>
    </location>
</feature>
<feature type="transmembrane region" description="Helical; Name=3" evidence="2">
    <location>
        <begin position="129"/>
        <end position="151"/>
    </location>
</feature>
<feature type="transmembrane region" description="Helical; Name=4" evidence="2">
    <location>
        <begin position="169"/>
        <end position="189"/>
    </location>
</feature>
<feature type="transmembrane region" description="Helical; Name=5" evidence="2">
    <location>
        <begin position="197"/>
        <end position="217"/>
    </location>
</feature>
<feature type="transmembrane region" description="Helical; Name=6" evidence="2">
    <location>
        <begin position="235"/>
        <end position="255"/>
    </location>
</feature>
<feature type="short sequence motif" description="NPA 1" evidence="1">
    <location>
        <begin position="111"/>
        <end position="113"/>
    </location>
</feature>
<feature type="short sequence motif" description="NPA 2" evidence="1">
    <location>
        <begin position="222"/>
        <end position="224"/>
    </location>
</feature>
<accession>Q9ATN2</accession>
<proteinExistence type="evidence at transcript level"/>
<gene>
    <name type="primary">NIP2-2</name>
    <name type="synonym">NIP2B</name>
</gene>
<dbReference type="EMBL" id="AF326485">
    <property type="protein sequence ID" value="AAK26752.1"/>
    <property type="molecule type" value="mRNA"/>
</dbReference>
<dbReference type="RefSeq" id="NP_001105020.1">
    <property type="nucleotide sequence ID" value="NM_001111550.1"/>
</dbReference>
<dbReference type="SMR" id="Q9ATN2"/>
<dbReference type="FunCoup" id="Q9ATN2">
    <property type="interactions" value="27"/>
</dbReference>
<dbReference type="STRING" id="4577.Q9ATN2"/>
<dbReference type="PaxDb" id="4577-GRMZM2G137108_P01"/>
<dbReference type="EnsemblPlants" id="Zm00001eb279660_T001">
    <property type="protein sequence ID" value="Zm00001eb279660_P001"/>
    <property type="gene ID" value="Zm00001eb279660"/>
</dbReference>
<dbReference type="GeneID" id="541884"/>
<dbReference type="Gramene" id="Zm00001eb279660_T001">
    <property type="protein sequence ID" value="Zm00001eb279660_P001"/>
    <property type="gene ID" value="Zm00001eb279660"/>
</dbReference>
<dbReference type="KEGG" id="zma:541884"/>
<dbReference type="MaizeGDB" id="403446"/>
<dbReference type="eggNOG" id="KOG0223">
    <property type="taxonomic scope" value="Eukaryota"/>
</dbReference>
<dbReference type="HOGENOM" id="CLU_020019_3_1_1"/>
<dbReference type="InParanoid" id="Q9ATN2"/>
<dbReference type="OMA" id="SFRIRRY"/>
<dbReference type="OrthoDB" id="3222at2759"/>
<dbReference type="Proteomes" id="UP000007305">
    <property type="component" value="Chromosome 6"/>
</dbReference>
<dbReference type="ExpressionAtlas" id="Q9ATN2">
    <property type="expression patterns" value="baseline and differential"/>
</dbReference>
<dbReference type="GO" id="GO:0016020">
    <property type="term" value="C:membrane"/>
    <property type="evidence" value="ECO:0007669"/>
    <property type="project" value="UniProtKB-SubCell"/>
</dbReference>
<dbReference type="GO" id="GO:0015267">
    <property type="term" value="F:channel activity"/>
    <property type="evidence" value="ECO:0007669"/>
    <property type="project" value="InterPro"/>
</dbReference>
<dbReference type="CDD" id="cd00333">
    <property type="entry name" value="MIP"/>
    <property type="match status" value="1"/>
</dbReference>
<dbReference type="FunFam" id="1.20.1080.10:FF:000013">
    <property type="entry name" value="Aquaporin NIP2-1"/>
    <property type="match status" value="1"/>
</dbReference>
<dbReference type="Gene3D" id="1.20.1080.10">
    <property type="entry name" value="Glycerol uptake facilitator protein"/>
    <property type="match status" value="1"/>
</dbReference>
<dbReference type="InterPro" id="IPR023271">
    <property type="entry name" value="Aquaporin-like"/>
</dbReference>
<dbReference type="InterPro" id="IPR034294">
    <property type="entry name" value="Aquaporin_transptr"/>
</dbReference>
<dbReference type="InterPro" id="IPR000425">
    <property type="entry name" value="MIP"/>
</dbReference>
<dbReference type="InterPro" id="IPR022357">
    <property type="entry name" value="MIP_CS"/>
</dbReference>
<dbReference type="PANTHER" id="PTHR45724">
    <property type="entry name" value="AQUAPORIN NIP2-1"/>
    <property type="match status" value="1"/>
</dbReference>
<dbReference type="PANTHER" id="PTHR45724:SF9">
    <property type="entry name" value="AQUAPORIN NIP2-2"/>
    <property type="match status" value="1"/>
</dbReference>
<dbReference type="Pfam" id="PF00230">
    <property type="entry name" value="MIP"/>
    <property type="match status" value="1"/>
</dbReference>
<dbReference type="PRINTS" id="PR00783">
    <property type="entry name" value="MINTRINSICP"/>
</dbReference>
<dbReference type="SUPFAM" id="SSF81338">
    <property type="entry name" value="Aquaporin-like"/>
    <property type="match status" value="1"/>
</dbReference>
<dbReference type="PROSITE" id="PS00221">
    <property type="entry name" value="MIP"/>
    <property type="match status" value="1"/>
</dbReference>
<sequence>MAAASTTSRTNSRVNYSNEIHDLSTVQSGSVVPTLFYPDKSIADIFPPHLGKKVISEVVATFLLVFVTCGAASIYGEDNRRISQLGQSVAGGLIVTVMIYATGHISGAHMNPAVTLSFACFRHFPWIQVPFYWAAQFTGAMCAAFVLKAVLHPIAVIGTTTPSGPHWHALLIEIVVTFNMMFVTCAVATDSRAVGELAGLAVGSAVCITSIFAGPVSGGSMNPARTLAPAVASNVFTGLWIYFLGPVIGTLSGAWVYTYIRFEEAPAAKDTQRLSSFKLRRMQSQLAADEFDTV</sequence>
<keyword id="KW-0472">Membrane</keyword>
<keyword id="KW-1185">Reference proteome</keyword>
<keyword id="KW-0677">Repeat</keyword>
<keyword id="KW-0812">Transmembrane</keyword>
<keyword id="KW-1133">Transmembrane helix</keyword>
<keyword id="KW-0813">Transport</keyword>
<reference key="1">
    <citation type="journal article" date="2001" name="Plant Physiol.">
        <title>Aquaporins constitute a large and highly divergent protein family in maize.</title>
        <authorList>
            <person name="Chaumont F."/>
            <person name="Barrieu F."/>
            <person name="Wojcik E."/>
            <person name="Chrispeels M.J."/>
            <person name="Jung R."/>
        </authorList>
    </citation>
    <scope>NUCLEOTIDE SEQUENCE [MRNA]</scope>
    <scope>GENE FAMILY</scope>
    <scope>NOMENCLATURE</scope>
    <source>
        <strain>cv. B73</strain>
    </source>
</reference>
<protein>
    <recommendedName>
        <fullName>Aquaporin NIP2-2</fullName>
    </recommendedName>
    <alternativeName>
        <fullName>NOD26-like intrinsic protein 2-2</fullName>
    </alternativeName>
    <alternativeName>
        <fullName>ZmNIP2-2</fullName>
    </alternativeName>
    <alternativeName>
        <fullName>ZmNIP2;2</fullName>
    </alternativeName>
</protein>
<comment type="function">
    <text evidence="1">Aquaporins facilitate the transport of water and small neutral solutes across cell membranes.</text>
</comment>
<comment type="subcellular location">
    <subcellularLocation>
        <location evidence="3">Membrane</location>
        <topology evidence="3">Multi-pass membrane protein</topology>
    </subcellularLocation>
</comment>
<comment type="domain">
    <text>Aquaporins contain two tandem repeats each containing three membrane-spanning domains and a pore-forming loop with the signature motif Asn-Pro-Ala (NPA).</text>
</comment>
<comment type="similarity">
    <text evidence="3">Belongs to the MIP/aquaporin (TC 1.A.8) family. NIP (TC 1.A.8.12) subfamily.</text>
</comment>
<evidence type="ECO:0000250" key="1"/>
<evidence type="ECO:0000255" key="2"/>
<evidence type="ECO:0000305" key="3"/>
<organism>
    <name type="scientific">Zea mays</name>
    <name type="common">Maize</name>
    <dbReference type="NCBI Taxonomy" id="4577"/>
    <lineage>
        <taxon>Eukaryota</taxon>
        <taxon>Viridiplantae</taxon>
        <taxon>Streptophyta</taxon>
        <taxon>Embryophyta</taxon>
        <taxon>Tracheophyta</taxon>
        <taxon>Spermatophyta</taxon>
        <taxon>Magnoliopsida</taxon>
        <taxon>Liliopsida</taxon>
        <taxon>Poales</taxon>
        <taxon>Poaceae</taxon>
        <taxon>PACMAD clade</taxon>
        <taxon>Panicoideae</taxon>
        <taxon>Andropogonodae</taxon>
        <taxon>Andropogoneae</taxon>
        <taxon>Tripsacinae</taxon>
        <taxon>Zea</taxon>
    </lineage>
</organism>